<sequence>MANIEKDHQKVILVGDGAVGSSYAYALTLQGIAQEVGIVDIFKEKTQGDAIDLSDALAFTSPKKIYAAEYSDAKDADVVVITAGAPQKPGETRLDLVSKNLKILKTIVDPIVESGFNGIFLVAANPVDILTYATWKLSGFPKERVIGSGTSLDSARFRKDIAEMVNVDARSVHAYIMGEHGDTEFPVWSHANIGGIKISEWVKAHPEVKEEELVKIFESVRDAAYTIINLKGATFYGIGTALARITKAILDDENAVLPLSVFMDGQYGLNDIFIGSPAVINRSGITNILEIPLTDHEMESMHKSAKQLKDIVTKAFEELDIETRQ</sequence>
<keyword id="KW-0021">Allosteric enzyme</keyword>
<keyword id="KW-0963">Cytoplasm</keyword>
<keyword id="KW-0520">NAD</keyword>
<keyword id="KW-0560">Oxidoreductase</keyword>
<keyword id="KW-0597">Phosphoprotein</keyword>
<keyword id="KW-1185">Reference proteome</keyword>
<dbReference type="EC" id="1.1.1.27" evidence="1"/>
<dbReference type="EMBL" id="CR936503">
    <property type="protein sequence ID" value="CAI55913.1"/>
    <property type="molecule type" value="Genomic_DNA"/>
</dbReference>
<dbReference type="RefSeq" id="WP_011375299.1">
    <property type="nucleotide sequence ID" value="NC_007576.1"/>
</dbReference>
<dbReference type="SMR" id="Q38V71"/>
<dbReference type="STRING" id="314315.LCA_1606"/>
<dbReference type="GeneID" id="57132529"/>
<dbReference type="KEGG" id="lsa:LCA_1606"/>
<dbReference type="eggNOG" id="COG0039">
    <property type="taxonomic scope" value="Bacteria"/>
</dbReference>
<dbReference type="HOGENOM" id="CLU_045401_1_1_9"/>
<dbReference type="OrthoDB" id="9802969at2"/>
<dbReference type="UniPathway" id="UPA00554">
    <property type="reaction ID" value="UER00611"/>
</dbReference>
<dbReference type="Proteomes" id="UP000002707">
    <property type="component" value="Chromosome"/>
</dbReference>
<dbReference type="GO" id="GO:0005737">
    <property type="term" value="C:cytoplasm"/>
    <property type="evidence" value="ECO:0007669"/>
    <property type="project" value="UniProtKB-SubCell"/>
</dbReference>
<dbReference type="GO" id="GO:0004459">
    <property type="term" value="F:L-lactate dehydrogenase activity"/>
    <property type="evidence" value="ECO:0007669"/>
    <property type="project" value="UniProtKB-UniRule"/>
</dbReference>
<dbReference type="GO" id="GO:0006096">
    <property type="term" value="P:glycolytic process"/>
    <property type="evidence" value="ECO:0007669"/>
    <property type="project" value="UniProtKB-UniRule"/>
</dbReference>
<dbReference type="GO" id="GO:0006089">
    <property type="term" value="P:lactate metabolic process"/>
    <property type="evidence" value="ECO:0007669"/>
    <property type="project" value="TreeGrafter"/>
</dbReference>
<dbReference type="CDD" id="cd05291">
    <property type="entry name" value="HicDH_like"/>
    <property type="match status" value="1"/>
</dbReference>
<dbReference type="FunFam" id="3.40.50.720:FF:000018">
    <property type="entry name" value="Malate dehydrogenase"/>
    <property type="match status" value="1"/>
</dbReference>
<dbReference type="Gene3D" id="3.90.110.10">
    <property type="entry name" value="Lactate dehydrogenase/glycoside hydrolase, family 4, C-terminal"/>
    <property type="match status" value="1"/>
</dbReference>
<dbReference type="Gene3D" id="3.40.50.720">
    <property type="entry name" value="NAD(P)-binding Rossmann-like Domain"/>
    <property type="match status" value="1"/>
</dbReference>
<dbReference type="HAMAP" id="MF_00488">
    <property type="entry name" value="Lactate_dehydrog"/>
    <property type="match status" value="1"/>
</dbReference>
<dbReference type="InterPro" id="IPR001557">
    <property type="entry name" value="L-lactate/malate_DH"/>
</dbReference>
<dbReference type="InterPro" id="IPR011304">
    <property type="entry name" value="L-lactate_DH"/>
</dbReference>
<dbReference type="InterPro" id="IPR018177">
    <property type="entry name" value="L-lactate_DH_AS"/>
</dbReference>
<dbReference type="InterPro" id="IPR022383">
    <property type="entry name" value="Lactate/malate_DH_C"/>
</dbReference>
<dbReference type="InterPro" id="IPR001236">
    <property type="entry name" value="Lactate/malate_DH_N"/>
</dbReference>
<dbReference type="InterPro" id="IPR015955">
    <property type="entry name" value="Lactate_DH/Glyco_Ohase_4_C"/>
</dbReference>
<dbReference type="InterPro" id="IPR036291">
    <property type="entry name" value="NAD(P)-bd_dom_sf"/>
</dbReference>
<dbReference type="NCBIfam" id="TIGR01771">
    <property type="entry name" value="L-LDH-NAD"/>
    <property type="match status" value="1"/>
</dbReference>
<dbReference type="NCBIfam" id="NF000824">
    <property type="entry name" value="PRK00066.1"/>
    <property type="match status" value="1"/>
</dbReference>
<dbReference type="NCBIfam" id="NF004863">
    <property type="entry name" value="PRK06223.1"/>
    <property type="match status" value="1"/>
</dbReference>
<dbReference type="PANTHER" id="PTHR43128">
    <property type="entry name" value="L-2-HYDROXYCARBOXYLATE DEHYDROGENASE (NAD(P)(+))"/>
    <property type="match status" value="1"/>
</dbReference>
<dbReference type="PANTHER" id="PTHR43128:SF16">
    <property type="entry name" value="L-LACTATE DEHYDROGENASE"/>
    <property type="match status" value="1"/>
</dbReference>
<dbReference type="Pfam" id="PF02866">
    <property type="entry name" value="Ldh_1_C"/>
    <property type="match status" value="1"/>
</dbReference>
<dbReference type="Pfam" id="PF00056">
    <property type="entry name" value="Ldh_1_N"/>
    <property type="match status" value="1"/>
</dbReference>
<dbReference type="PIRSF" id="PIRSF000102">
    <property type="entry name" value="Lac_mal_DH"/>
    <property type="match status" value="1"/>
</dbReference>
<dbReference type="PRINTS" id="PR00086">
    <property type="entry name" value="LLDHDRGNASE"/>
</dbReference>
<dbReference type="SUPFAM" id="SSF56327">
    <property type="entry name" value="LDH C-terminal domain-like"/>
    <property type="match status" value="1"/>
</dbReference>
<dbReference type="SUPFAM" id="SSF51735">
    <property type="entry name" value="NAD(P)-binding Rossmann-fold domains"/>
    <property type="match status" value="1"/>
</dbReference>
<dbReference type="PROSITE" id="PS00064">
    <property type="entry name" value="L_LDH"/>
    <property type="match status" value="1"/>
</dbReference>
<protein>
    <recommendedName>
        <fullName evidence="1">L-lactate dehydrogenase</fullName>
        <shortName evidence="1">L-LDH</shortName>
        <ecNumber evidence="1">1.1.1.27</ecNumber>
    </recommendedName>
</protein>
<comment type="function">
    <text evidence="1">Catalyzes the conversion of lactate to pyruvate.</text>
</comment>
<comment type="catalytic activity">
    <reaction evidence="1">
        <text>(S)-lactate + NAD(+) = pyruvate + NADH + H(+)</text>
        <dbReference type="Rhea" id="RHEA:23444"/>
        <dbReference type="ChEBI" id="CHEBI:15361"/>
        <dbReference type="ChEBI" id="CHEBI:15378"/>
        <dbReference type="ChEBI" id="CHEBI:16651"/>
        <dbReference type="ChEBI" id="CHEBI:57540"/>
        <dbReference type="ChEBI" id="CHEBI:57945"/>
        <dbReference type="EC" id="1.1.1.27"/>
    </reaction>
</comment>
<comment type="activity regulation">
    <text evidence="1">Allosterically activated by fructose 1,6-bisphosphate (FBP).</text>
</comment>
<comment type="pathway">
    <text evidence="1">Fermentation; pyruvate fermentation to lactate; (S)-lactate from pyruvate: step 1/1.</text>
</comment>
<comment type="subunit">
    <text evidence="1">Homotetramer.</text>
</comment>
<comment type="subcellular location">
    <subcellularLocation>
        <location evidence="1">Cytoplasm</location>
    </subcellularLocation>
</comment>
<comment type="similarity">
    <text evidence="1">Belongs to the LDH/MDH superfamily. LDH family.</text>
</comment>
<name>LDH_LATSS</name>
<reference key="1">
    <citation type="journal article" date="2005" name="Nat. Biotechnol.">
        <title>The complete genome sequence of the meat-borne lactic acid bacterium Lactobacillus sakei 23K.</title>
        <authorList>
            <person name="Chaillou S."/>
            <person name="Champomier-Verges M.-C."/>
            <person name="Cornet M."/>
            <person name="Crutz-Le Coq A.-M."/>
            <person name="Dudez A.-M."/>
            <person name="Martin V."/>
            <person name="Beaufils S."/>
            <person name="Darbon-Rongere E."/>
            <person name="Bossy R."/>
            <person name="Loux V."/>
            <person name="Zagorec M."/>
        </authorList>
    </citation>
    <scope>NUCLEOTIDE SEQUENCE [LARGE SCALE GENOMIC DNA]</scope>
    <source>
        <strain>23K</strain>
    </source>
</reference>
<gene>
    <name evidence="1" type="primary">ldh</name>
    <name type="ordered locus">LCA_1606</name>
</gene>
<proteinExistence type="inferred from homology"/>
<feature type="chain" id="PRO_0000237549" description="L-lactate dehydrogenase">
    <location>
        <begin position="1"/>
        <end position="325"/>
    </location>
</feature>
<feature type="active site" description="Proton acceptor" evidence="1">
    <location>
        <position position="180"/>
    </location>
</feature>
<feature type="binding site" evidence="1">
    <location>
        <position position="19"/>
    </location>
    <ligand>
        <name>NAD(+)</name>
        <dbReference type="ChEBI" id="CHEBI:57540"/>
    </ligand>
</feature>
<feature type="binding site" evidence="1">
    <location>
        <position position="40"/>
    </location>
    <ligand>
        <name>NAD(+)</name>
        <dbReference type="ChEBI" id="CHEBI:57540"/>
    </ligand>
</feature>
<feature type="binding site" evidence="1">
    <location>
        <position position="45"/>
    </location>
    <ligand>
        <name>NAD(+)</name>
        <dbReference type="ChEBI" id="CHEBI:57540"/>
    </ligand>
</feature>
<feature type="binding site" evidence="1">
    <location>
        <position position="70"/>
    </location>
    <ligand>
        <name>NAD(+)</name>
        <dbReference type="ChEBI" id="CHEBI:57540"/>
    </ligand>
</feature>
<feature type="binding site" evidence="1">
    <location>
        <begin position="84"/>
        <end position="85"/>
    </location>
    <ligand>
        <name>NAD(+)</name>
        <dbReference type="ChEBI" id="CHEBI:57540"/>
    </ligand>
</feature>
<feature type="binding site" evidence="1">
    <location>
        <position position="87"/>
    </location>
    <ligand>
        <name>substrate</name>
    </ligand>
</feature>
<feature type="binding site" evidence="1">
    <location>
        <position position="93"/>
    </location>
    <ligand>
        <name>substrate</name>
    </ligand>
</feature>
<feature type="binding site" evidence="1">
    <location>
        <position position="106"/>
    </location>
    <ligand>
        <name>NAD(+)</name>
        <dbReference type="ChEBI" id="CHEBI:57540"/>
    </ligand>
</feature>
<feature type="binding site" evidence="1">
    <location>
        <begin position="123"/>
        <end position="125"/>
    </location>
    <ligand>
        <name>NAD(+)</name>
        <dbReference type="ChEBI" id="CHEBI:57540"/>
    </ligand>
</feature>
<feature type="binding site" evidence="1">
    <location>
        <begin position="125"/>
        <end position="128"/>
    </location>
    <ligand>
        <name>substrate</name>
    </ligand>
</feature>
<feature type="binding site" evidence="1">
    <location>
        <position position="148"/>
    </location>
    <ligand>
        <name>NAD(+)</name>
        <dbReference type="ChEBI" id="CHEBI:57540"/>
    </ligand>
</feature>
<feature type="binding site" evidence="1">
    <location>
        <begin position="153"/>
        <end position="156"/>
    </location>
    <ligand>
        <name>substrate</name>
    </ligand>
</feature>
<feature type="binding site" evidence="1">
    <location>
        <position position="158"/>
    </location>
    <ligand>
        <name>beta-D-fructose 1,6-bisphosphate</name>
        <dbReference type="ChEBI" id="CHEBI:32966"/>
        <note>allosteric activator</note>
    </ligand>
</feature>
<feature type="binding site" evidence="1">
    <location>
        <position position="173"/>
    </location>
    <ligand>
        <name>beta-D-fructose 1,6-bisphosphate</name>
        <dbReference type="ChEBI" id="CHEBI:32966"/>
        <note>allosteric activator</note>
    </ligand>
</feature>
<feature type="binding site" evidence="1">
    <location>
        <position position="234"/>
    </location>
    <ligand>
        <name>substrate</name>
    </ligand>
</feature>
<feature type="modified residue" description="Phosphotyrosine" evidence="1">
    <location>
        <position position="225"/>
    </location>
</feature>
<organism>
    <name type="scientific">Latilactobacillus sakei subsp. sakei (strain 23K)</name>
    <name type="common">Lactobacillus sakei subsp. sakei</name>
    <dbReference type="NCBI Taxonomy" id="314315"/>
    <lineage>
        <taxon>Bacteria</taxon>
        <taxon>Bacillati</taxon>
        <taxon>Bacillota</taxon>
        <taxon>Bacilli</taxon>
        <taxon>Lactobacillales</taxon>
        <taxon>Lactobacillaceae</taxon>
        <taxon>Latilactobacillus</taxon>
    </lineage>
</organism>
<accession>Q38V71</accession>
<evidence type="ECO:0000255" key="1">
    <source>
        <dbReference type="HAMAP-Rule" id="MF_00488"/>
    </source>
</evidence>